<dbReference type="EMBL" id="AB005289">
    <property type="protein sequence ID" value="BAA28861.1"/>
    <property type="molecule type" value="mRNA"/>
</dbReference>
<dbReference type="EMBL" id="AF133659">
    <property type="protein sequence ID" value="AAD33045.1"/>
    <property type="molecule type" value="mRNA"/>
</dbReference>
<dbReference type="EMBL" id="AF241887">
    <property type="protein sequence ID" value="AAK20173.1"/>
    <property type="molecule type" value="Genomic_DNA"/>
</dbReference>
<dbReference type="EMBL" id="AF241872">
    <property type="protein sequence ID" value="AAK20173.1"/>
    <property type="status" value="JOINED"/>
    <property type="molecule type" value="Genomic_DNA"/>
</dbReference>
<dbReference type="EMBL" id="AF241873">
    <property type="protein sequence ID" value="AAK20173.1"/>
    <property type="status" value="JOINED"/>
    <property type="molecule type" value="Genomic_DNA"/>
</dbReference>
<dbReference type="EMBL" id="AF241874">
    <property type="protein sequence ID" value="AAK20173.1"/>
    <property type="status" value="JOINED"/>
    <property type="molecule type" value="Genomic_DNA"/>
</dbReference>
<dbReference type="EMBL" id="AF241875">
    <property type="protein sequence ID" value="AAK20173.1"/>
    <property type="status" value="JOINED"/>
    <property type="molecule type" value="Genomic_DNA"/>
</dbReference>
<dbReference type="EMBL" id="AF241876">
    <property type="protein sequence ID" value="AAK20173.1"/>
    <property type="status" value="JOINED"/>
    <property type="molecule type" value="Genomic_DNA"/>
</dbReference>
<dbReference type="EMBL" id="AF241877">
    <property type="protein sequence ID" value="AAK20173.1"/>
    <property type="status" value="JOINED"/>
    <property type="molecule type" value="Genomic_DNA"/>
</dbReference>
<dbReference type="EMBL" id="AF241878">
    <property type="protein sequence ID" value="AAK20173.1"/>
    <property type="status" value="JOINED"/>
    <property type="molecule type" value="Genomic_DNA"/>
</dbReference>
<dbReference type="EMBL" id="AF241879">
    <property type="protein sequence ID" value="AAK20173.1"/>
    <property type="status" value="JOINED"/>
    <property type="molecule type" value="Genomic_DNA"/>
</dbReference>
<dbReference type="EMBL" id="AF241880">
    <property type="protein sequence ID" value="AAK20173.1"/>
    <property type="status" value="JOINED"/>
    <property type="molecule type" value="Genomic_DNA"/>
</dbReference>
<dbReference type="EMBL" id="AF241881">
    <property type="protein sequence ID" value="AAK20173.1"/>
    <property type="status" value="JOINED"/>
    <property type="molecule type" value="Genomic_DNA"/>
</dbReference>
<dbReference type="EMBL" id="AF241882">
    <property type="protein sequence ID" value="AAK20173.1"/>
    <property type="status" value="JOINED"/>
    <property type="molecule type" value="Genomic_DNA"/>
</dbReference>
<dbReference type="EMBL" id="AF241883">
    <property type="protein sequence ID" value="AAK20173.1"/>
    <property type="status" value="JOINED"/>
    <property type="molecule type" value="Genomic_DNA"/>
</dbReference>
<dbReference type="EMBL" id="AF241884">
    <property type="protein sequence ID" value="AAK20173.1"/>
    <property type="status" value="JOINED"/>
    <property type="molecule type" value="Genomic_DNA"/>
</dbReference>
<dbReference type="EMBL" id="AF241885">
    <property type="protein sequence ID" value="AAK20173.1"/>
    <property type="status" value="JOINED"/>
    <property type="molecule type" value="Genomic_DNA"/>
</dbReference>
<dbReference type="EMBL" id="AF241886">
    <property type="protein sequence ID" value="AAK20173.1"/>
    <property type="status" value="JOINED"/>
    <property type="molecule type" value="Genomic_DNA"/>
</dbReference>
<dbReference type="EMBL" id="AF038950">
    <property type="protein sequence ID" value="AAC39865.1"/>
    <property type="molecule type" value="mRNA"/>
</dbReference>
<dbReference type="EMBL" id="BT009918">
    <property type="protein sequence ID" value="AAP88920.1"/>
    <property type="molecule type" value="mRNA"/>
</dbReference>
<dbReference type="EMBL" id="AL360179">
    <property type="status" value="NOT_ANNOTATED_CDS"/>
    <property type="molecule type" value="Genomic_DNA"/>
</dbReference>
<dbReference type="EMBL" id="AL359545">
    <property type="status" value="NOT_ANNOTATED_CDS"/>
    <property type="molecule type" value="Genomic_DNA"/>
</dbReference>
<dbReference type="EMBL" id="CH471104">
    <property type="protein sequence ID" value="EAW98635.1"/>
    <property type="molecule type" value="Genomic_DNA"/>
</dbReference>
<dbReference type="EMBL" id="BC006323">
    <property type="protein sequence ID" value="AAH06323.1"/>
    <property type="molecule type" value="mRNA"/>
</dbReference>
<dbReference type="EMBL" id="AF078777">
    <property type="protein sequence ID" value="AAD47141.1"/>
    <property type="molecule type" value="mRNA"/>
</dbReference>
<dbReference type="CCDS" id="CCDS14428.1">
    <molecule id="O75027-2"/>
</dbReference>
<dbReference type="CCDS" id="CCDS65290.1">
    <molecule id="O75027-3"/>
</dbReference>
<dbReference type="CCDS" id="CCDS65291.1">
    <molecule id="O75027-1"/>
</dbReference>
<dbReference type="RefSeq" id="NP_001258625.1">
    <molecule id="O75027-1"/>
    <property type="nucleotide sequence ID" value="NM_001271696.3"/>
</dbReference>
<dbReference type="RefSeq" id="NP_001258626.1">
    <molecule id="O75027-3"/>
    <property type="nucleotide sequence ID" value="NM_001271697.3"/>
</dbReference>
<dbReference type="RefSeq" id="NP_004290.2">
    <molecule id="O75027-2"/>
    <property type="nucleotide sequence ID" value="NM_004299.4"/>
</dbReference>
<dbReference type="PDB" id="7VGF">
    <property type="method" value="EM"/>
    <property type="resolution" value="3.30 A"/>
    <property type="chains" value="A/B=72-751"/>
</dbReference>
<dbReference type="PDBsum" id="7VGF"/>
<dbReference type="EMDB" id="EMD-31967"/>
<dbReference type="SMR" id="O75027"/>
<dbReference type="BioGRID" id="106540">
    <property type="interactions" value="167"/>
</dbReference>
<dbReference type="ComplexPortal" id="CPX-8302">
    <property type="entry name" value="ABCB10-ABCB7-FECH ABC transporter"/>
</dbReference>
<dbReference type="FunCoup" id="O75027">
    <property type="interactions" value="1776"/>
</dbReference>
<dbReference type="IntAct" id="O75027">
    <property type="interactions" value="39"/>
</dbReference>
<dbReference type="MINT" id="O75027"/>
<dbReference type="STRING" id="9606.ENSP00000253577"/>
<dbReference type="TCDB" id="3.A.1.210.4">
    <property type="family name" value="the atp-binding cassette (abc) superfamily"/>
</dbReference>
<dbReference type="GlyCosmos" id="O75027">
    <property type="glycosylation" value="2 sites, 1 glycan"/>
</dbReference>
<dbReference type="GlyGen" id="O75027">
    <property type="glycosylation" value="3 sites, 1 O-linked glycan (3 sites)"/>
</dbReference>
<dbReference type="iPTMnet" id="O75027"/>
<dbReference type="PhosphoSitePlus" id="O75027"/>
<dbReference type="SwissPalm" id="O75027"/>
<dbReference type="BioMuta" id="ABCB7"/>
<dbReference type="jPOST" id="O75027"/>
<dbReference type="MassIVE" id="O75027"/>
<dbReference type="PaxDb" id="9606-ENSP00000253577"/>
<dbReference type="PeptideAtlas" id="O75027"/>
<dbReference type="ProteomicsDB" id="33710"/>
<dbReference type="ProteomicsDB" id="49702">
    <molecule id="O75027-1"/>
</dbReference>
<dbReference type="ProteomicsDB" id="49703">
    <molecule id="O75027-2"/>
</dbReference>
<dbReference type="Pumba" id="O75027"/>
<dbReference type="Antibodypedia" id="28030">
    <property type="antibodies" value="288 antibodies from 33 providers"/>
</dbReference>
<dbReference type="DNASU" id="22"/>
<dbReference type="Ensembl" id="ENST00000253577.9">
    <molecule id="O75027-2"/>
    <property type="protein sequence ID" value="ENSP00000253577.3"/>
    <property type="gene ID" value="ENSG00000131269.19"/>
</dbReference>
<dbReference type="Ensembl" id="ENST00000339447.8">
    <molecule id="O75027-3"/>
    <property type="protein sequence ID" value="ENSP00000343849.4"/>
    <property type="gene ID" value="ENSG00000131269.19"/>
</dbReference>
<dbReference type="Ensembl" id="ENST00000373394.8">
    <molecule id="O75027-1"/>
    <property type="protein sequence ID" value="ENSP00000362492.3"/>
    <property type="gene ID" value="ENSG00000131269.19"/>
</dbReference>
<dbReference type="GeneID" id="22"/>
<dbReference type="KEGG" id="hsa:22"/>
<dbReference type="MANE-Select" id="ENST00000373394.8">
    <property type="protein sequence ID" value="ENSP00000362492.3"/>
    <property type="RefSeq nucleotide sequence ID" value="NM_001271696.3"/>
    <property type="RefSeq protein sequence ID" value="NP_001258625.1"/>
</dbReference>
<dbReference type="UCSC" id="uc004ebz.5">
    <molecule id="O75027-1"/>
    <property type="organism name" value="human"/>
</dbReference>
<dbReference type="AGR" id="HGNC:48"/>
<dbReference type="CTD" id="22"/>
<dbReference type="DisGeNET" id="22"/>
<dbReference type="GeneCards" id="ABCB7"/>
<dbReference type="HGNC" id="HGNC:48">
    <property type="gene designation" value="ABCB7"/>
</dbReference>
<dbReference type="HPA" id="ENSG00000131269">
    <property type="expression patterns" value="Low tissue specificity"/>
</dbReference>
<dbReference type="MalaCards" id="ABCB7"/>
<dbReference type="MIM" id="300135">
    <property type="type" value="gene"/>
</dbReference>
<dbReference type="MIM" id="301310">
    <property type="type" value="phenotype"/>
</dbReference>
<dbReference type="neXtProt" id="NX_O75027"/>
<dbReference type="OpenTargets" id="ENSG00000131269"/>
<dbReference type="Orphanet" id="2802">
    <property type="disease" value="X-linked sideroblastic anemia and spinocerebellar ataxia"/>
</dbReference>
<dbReference type="PharmGKB" id="PA24389"/>
<dbReference type="VEuPathDB" id="HostDB:ENSG00000131269"/>
<dbReference type="eggNOG" id="KOG0057">
    <property type="taxonomic scope" value="Eukaryota"/>
</dbReference>
<dbReference type="GeneTree" id="ENSGT00940000156281"/>
<dbReference type="InParanoid" id="O75027"/>
<dbReference type="OMA" id="VFHIIPI"/>
<dbReference type="OrthoDB" id="6500128at2759"/>
<dbReference type="PAN-GO" id="O75027">
    <property type="GO annotations" value="5 GO annotations based on evolutionary models"/>
</dbReference>
<dbReference type="PhylomeDB" id="O75027"/>
<dbReference type="TreeFam" id="TF105195"/>
<dbReference type="PathwayCommons" id="O75027"/>
<dbReference type="Reactome" id="R-HSA-1369007">
    <property type="pathway name" value="Mitochondrial ABC transporters"/>
</dbReference>
<dbReference type="Reactome" id="R-HSA-2564830">
    <property type="pathway name" value="Cytosolic iron-sulfur cluster assembly"/>
</dbReference>
<dbReference type="SABIO-RK" id="O75027"/>
<dbReference type="SignaLink" id="O75027"/>
<dbReference type="BioGRID-ORCS" id="22">
    <property type="hits" value="420 hits in 796 CRISPR screens"/>
</dbReference>
<dbReference type="ChiTaRS" id="ABCB7">
    <property type="organism name" value="human"/>
</dbReference>
<dbReference type="GeneWiki" id="ABCB7"/>
<dbReference type="GenomeRNAi" id="22"/>
<dbReference type="Pharos" id="O75027">
    <property type="development level" value="Tbio"/>
</dbReference>
<dbReference type="PRO" id="PR:O75027"/>
<dbReference type="Proteomes" id="UP000005640">
    <property type="component" value="Chromosome X"/>
</dbReference>
<dbReference type="RNAct" id="O75027">
    <property type="molecule type" value="protein"/>
</dbReference>
<dbReference type="Bgee" id="ENSG00000131269">
    <property type="expression patterns" value="Expressed in forelimb stylopod muscle and 190 other cell types or tissues"/>
</dbReference>
<dbReference type="ExpressionAtlas" id="O75027">
    <property type="expression patterns" value="baseline and differential"/>
</dbReference>
<dbReference type="GO" id="GO:0005743">
    <property type="term" value="C:mitochondrial inner membrane"/>
    <property type="evidence" value="ECO:0000314"/>
    <property type="project" value="UniProtKB"/>
</dbReference>
<dbReference type="GO" id="GO:0005739">
    <property type="term" value="C:mitochondrion"/>
    <property type="evidence" value="ECO:0000314"/>
    <property type="project" value="UniProtKB"/>
</dbReference>
<dbReference type="GO" id="GO:0140481">
    <property type="term" value="F:ABC-type iron-sulfur cluster transporter activity"/>
    <property type="evidence" value="ECO:0000315"/>
    <property type="project" value="UniProtKB"/>
</dbReference>
<dbReference type="GO" id="GO:0005524">
    <property type="term" value="F:ATP binding"/>
    <property type="evidence" value="ECO:0000304"/>
    <property type="project" value="ProtInc"/>
</dbReference>
<dbReference type="GO" id="GO:0016887">
    <property type="term" value="F:ATP hydrolysis activity"/>
    <property type="evidence" value="ECO:0007669"/>
    <property type="project" value="InterPro"/>
</dbReference>
<dbReference type="GO" id="GO:0042626">
    <property type="term" value="F:ATPase-coupled transmembrane transporter activity"/>
    <property type="evidence" value="ECO:0000318"/>
    <property type="project" value="GO_Central"/>
</dbReference>
<dbReference type="GO" id="GO:0015232">
    <property type="term" value="F:heme transmembrane transporter activity"/>
    <property type="evidence" value="ECO:0000304"/>
    <property type="project" value="ProtInc"/>
</dbReference>
<dbReference type="GO" id="GO:0042802">
    <property type="term" value="F:identical protein binding"/>
    <property type="evidence" value="ECO:0000353"/>
    <property type="project" value="IntAct"/>
</dbReference>
<dbReference type="GO" id="GO:0042803">
    <property type="term" value="F:protein homodimerization activity"/>
    <property type="evidence" value="ECO:0000314"/>
    <property type="project" value="UniProtKB"/>
</dbReference>
<dbReference type="GO" id="GO:0006879">
    <property type="term" value="P:intracellular iron ion homeostasis"/>
    <property type="evidence" value="ECO:0000315"/>
    <property type="project" value="UniProtKB"/>
</dbReference>
<dbReference type="GO" id="GO:0034755">
    <property type="term" value="P:iron ion transmembrane transport"/>
    <property type="evidence" value="ECO:0000314"/>
    <property type="project" value="UniProtKB"/>
</dbReference>
<dbReference type="GO" id="GO:0016226">
    <property type="term" value="P:iron-sulfur cluster assembly"/>
    <property type="evidence" value="ECO:0000250"/>
    <property type="project" value="UniProtKB"/>
</dbReference>
<dbReference type="GO" id="GO:0140466">
    <property type="term" value="P:iron-sulfur cluster export from the mitochondrion"/>
    <property type="evidence" value="ECO:0000315"/>
    <property type="project" value="UniProtKB"/>
</dbReference>
<dbReference type="GO" id="GO:1903427">
    <property type="term" value="P:negative regulation of reactive oxygen species biosynthetic process"/>
    <property type="evidence" value="ECO:0000250"/>
    <property type="project" value="UniProtKB"/>
</dbReference>
<dbReference type="GO" id="GO:0070455">
    <property type="term" value="P:positive regulation of heme biosynthetic process"/>
    <property type="evidence" value="ECO:0000315"/>
    <property type="project" value="UniProtKB"/>
</dbReference>
<dbReference type="GO" id="GO:1903331">
    <property type="term" value="P:positive regulation of iron-sulfur cluster assembly"/>
    <property type="evidence" value="ECO:0000315"/>
    <property type="project" value="UniProtKB"/>
</dbReference>
<dbReference type="GO" id="GO:0055085">
    <property type="term" value="P:transmembrane transport"/>
    <property type="evidence" value="ECO:0000318"/>
    <property type="project" value="GO_Central"/>
</dbReference>
<dbReference type="CDD" id="cd18582">
    <property type="entry name" value="ABC_6TM_ATM1_ABCB7"/>
    <property type="match status" value="1"/>
</dbReference>
<dbReference type="CDD" id="cd03253">
    <property type="entry name" value="ABCC_ATM1_transporter"/>
    <property type="match status" value="1"/>
</dbReference>
<dbReference type="FunFam" id="1.20.1560.10:FF:000004">
    <property type="entry name" value="ATP-binding cassette sub-family B member 7"/>
    <property type="match status" value="1"/>
</dbReference>
<dbReference type="FunFam" id="3.40.50.300:FF:000186">
    <property type="entry name" value="ATP-binding cassette sub-family B member 7, mitochondrial"/>
    <property type="match status" value="1"/>
</dbReference>
<dbReference type="Gene3D" id="1.20.1560.10">
    <property type="entry name" value="ABC transporter type 1, transmembrane domain"/>
    <property type="match status" value="1"/>
</dbReference>
<dbReference type="Gene3D" id="3.40.50.300">
    <property type="entry name" value="P-loop containing nucleotide triphosphate hydrolases"/>
    <property type="match status" value="1"/>
</dbReference>
<dbReference type="InterPro" id="IPR003593">
    <property type="entry name" value="AAA+_ATPase"/>
</dbReference>
<dbReference type="InterPro" id="IPR011527">
    <property type="entry name" value="ABC1_TM_dom"/>
</dbReference>
<dbReference type="InterPro" id="IPR036640">
    <property type="entry name" value="ABC1_TM_sf"/>
</dbReference>
<dbReference type="InterPro" id="IPR003439">
    <property type="entry name" value="ABC_transporter-like_ATP-bd"/>
</dbReference>
<dbReference type="InterPro" id="IPR017871">
    <property type="entry name" value="ABC_transporter-like_CS"/>
</dbReference>
<dbReference type="InterPro" id="IPR027417">
    <property type="entry name" value="P-loop_NTPase"/>
</dbReference>
<dbReference type="InterPro" id="IPR039421">
    <property type="entry name" value="Type_1_exporter"/>
</dbReference>
<dbReference type="PANTHER" id="PTHR24221">
    <property type="entry name" value="ATP-BINDING CASSETTE SUB-FAMILY B"/>
    <property type="match status" value="1"/>
</dbReference>
<dbReference type="PANTHER" id="PTHR24221:SF402">
    <property type="entry name" value="IRON-SULFUR CLUSTERS TRANSPORTER ABCB7, MITOCHONDRIAL"/>
    <property type="match status" value="1"/>
</dbReference>
<dbReference type="Pfam" id="PF00664">
    <property type="entry name" value="ABC_membrane"/>
    <property type="match status" value="1"/>
</dbReference>
<dbReference type="Pfam" id="PF00005">
    <property type="entry name" value="ABC_tran"/>
    <property type="match status" value="1"/>
</dbReference>
<dbReference type="SMART" id="SM00382">
    <property type="entry name" value="AAA"/>
    <property type="match status" value="1"/>
</dbReference>
<dbReference type="SUPFAM" id="SSF90123">
    <property type="entry name" value="ABC transporter transmembrane region"/>
    <property type="match status" value="1"/>
</dbReference>
<dbReference type="SUPFAM" id="SSF52540">
    <property type="entry name" value="P-loop containing nucleoside triphosphate hydrolases"/>
    <property type="match status" value="1"/>
</dbReference>
<dbReference type="PROSITE" id="PS50929">
    <property type="entry name" value="ABC_TM1F"/>
    <property type="match status" value="1"/>
</dbReference>
<dbReference type="PROSITE" id="PS00211">
    <property type="entry name" value="ABC_TRANSPORTER_1"/>
    <property type="match status" value="1"/>
</dbReference>
<dbReference type="PROSITE" id="PS50893">
    <property type="entry name" value="ABC_TRANSPORTER_2"/>
    <property type="match status" value="1"/>
</dbReference>
<sequence>MALLAMHSWRWAAAAAAFEKRRHSAILIRPLVSVSGSGPQWRPHQLGALGTARAYQIPESLKSITWQRLGKGNSGQFLDAAKALQVWPLIEKRTCWHGHAGGGLHTDPKEGLKDVDTRKIIKAMLSYVWPKDRPDLRARVAISLGFLGGAKAMNIVVPFMFKYAVDSLNQMSGNMLNLSDAPNTVATMATAVLIGYGVSRAGAAFFNEVRNAVFGKVAQNSIRRIAKNVFLHLHNLDLGFHLSRQTGALSKAIDRGTRGISFVLSALVFNLLPIMFEVMLVSGVLYYKCGAQFALVTLGTLGTYTAFTVAVTRWRTRFRIEMNKADNDAGNAAIDSLLNYETVKYFNNERYEAQRYDGFLKTYETASLKSTSTLAMLNFGQSAIFSVGLTAIMVLASQGIVAGTLTVGDLVMVNGLLFQLSLPLNFLGTVYRETRQALIDMNTLFTLLKVDTQIKDKVMASPLQITPQTATVAFDNVHFEYIEGQKVLSGISFEVPAGKKVAIVGGSGSGKSTIVRLLFRFYEPQKGSIYLAGQNIQDVSLESLRRAVGVVPQDAVLFHNTIYYNLLYGNISASPEEVYAVAKLAGLHDAILRMPHGYDTQVGERGLKLSGGEKQRVAIARAILKDPPVILYDEATSSLDSITEETILGAMKDVVKHRTSIFIAHRLSTVVDADEIIVLDQGKVAERGTHHGLLANPHSIYSEMWHTQSSRVQNHDNPKWEAKKENISKEEERKKLQEEIVNSVKGCGNCSC</sequence>
<gene>
    <name evidence="22" type="primary">ABCB7</name>
    <name type="synonym">ABC7</name>
</gene>
<proteinExistence type="evidence at protein level"/>
<comment type="function">
    <text evidence="3 4 9 12 15 16">Exports glutathione-coordinated iron-sulfur clusters such as [2Fe-2S]-(GS)4 cluster from the mitochondria to the cytosol in an ATP-dependent manner allowing the assembly of the cytosolic iron-sulfur (Fe/S) cluster-containing proteins and participates in iron homeostasis (PubMed:10196363, PubMed:17192393, PubMed:33157103). Moreover, through a functional complex formed of ABCB7, FECH and ABCB10, also plays a role in the cellular iron homeostasis, mitochondrial function and heme biosynthesis (PubMed:30765471). In cardiomyocytes, regulates cellular iron homeostasis and cellular reactive oxygen species (ROS) levels through its interaction with COX4I1 (By similarity). May also play a role in hematopoiesis (By similarity).</text>
</comment>
<comment type="catalytic activity">
    <reaction evidence="16">
        <text>(glutathione)4[2Fe(III)-2S] cluster(in) + ATP + H2O = (glutathione)4[2Fe(III)-2S] cluster(out) + ADP + phosphate + H(+)</text>
        <dbReference type="Rhea" id="RHEA:67028"/>
        <dbReference type="ChEBI" id="CHEBI:15377"/>
        <dbReference type="ChEBI" id="CHEBI:15378"/>
        <dbReference type="ChEBI" id="CHEBI:30616"/>
        <dbReference type="ChEBI" id="CHEBI:43474"/>
        <dbReference type="ChEBI" id="CHEBI:167627"/>
        <dbReference type="ChEBI" id="CHEBI:456216"/>
    </reaction>
    <physiologicalReaction direction="left-to-right" evidence="21">
        <dbReference type="Rhea" id="RHEA:67029"/>
    </physiologicalReaction>
</comment>
<comment type="activity regulation">
    <text evidence="16">ATPase activity is stimulated by glutathione.</text>
</comment>
<comment type="biophysicochemical properties">
    <kinetics>
        <KM evidence="16">5.3 mM for Mg-ATP</KM>
        <KM evidence="16">0.54 mM for Mg-ATP (in the presence of the [2Fe-2S](GS)4 cluster)</KM>
    </kinetics>
</comment>
<comment type="subunit">
    <text evidence="4 14 15">Homodimer or heterodimer (PubMed:30765471). Interacts with C10orf88/PAAT (PubMed:25063848). Forms a complex with ABCB10 and FECH, where a dimeric FECH bridges ABCB7 and ABCB10 homodimers; this complex may be required for cellular iron homeostasis, mitochondrial function and heme biosynthesis (PubMed:30765471). Interacts with FECH (PubMed:30765471). Interacts with ATP5F1A (By similarity). Interacts with COX4I1; this interaction allows the regulation of cellular iron homeostasis and cellular reactive oxygen species (ROS) levels in cardiomyocytes (By similarity).</text>
</comment>
<comment type="interaction">
    <interactant intactId="EBI-1236950">
        <id>O75027</id>
    </interactant>
    <interactant intactId="EBI-1236950">
        <id>O75027</id>
        <label>ABCB7</label>
    </interactant>
    <organismsDiffer>false</organismsDiffer>
    <experiments>3</experiments>
</comment>
<comment type="interaction">
    <interactant intactId="EBI-1236950">
        <id>O75027</id>
    </interactant>
    <interactant intactId="EBI-1390356">
        <id>P22830</id>
        <label>FECH</label>
    </interactant>
    <organismsDiffer>false</organismsDiffer>
    <experiments>9</experiments>
</comment>
<comment type="subcellular location">
    <subcellularLocation>
        <location evidence="1">Mitochondrion inner membrane</location>
        <topology evidence="1">Multi-pass membrane protein</topology>
    </subcellularLocation>
</comment>
<comment type="alternative products">
    <event type="alternative splicing"/>
    <isoform>
        <id>O75027-1</id>
        <name>1</name>
        <sequence type="displayed"/>
    </isoform>
    <isoform>
        <id>O75027-2</id>
        <name>2</name>
        <sequence type="described" ref="VSP_014635"/>
    </isoform>
    <isoform>
        <id>O75027-3</id>
        <name>3</name>
        <sequence type="described" ref="VSP_054700"/>
    </isoform>
</comment>
<comment type="disease" evidence="9 10 11 13 16">
    <disease id="DI-02459">
        <name>Spinocerebellar ataxia, X-linked 6, with or without sideroblastic anemia</name>
        <acronym>SCAX6</acronym>
        <description>An X-linked recessive disorder characterized by an infantile to early childhood onset of non-progressive cerebellar ataxia and mild anemia, with hypochromia and microcytosis.</description>
        <dbReference type="MIM" id="301310"/>
    </disease>
    <text>The disease is caused by variants affecting the gene represented in this entry.</text>
</comment>
<comment type="similarity">
    <text evidence="20">Belongs to the ABC transporter superfamily. ABCB family. Heavy Metal importer (TC 3.A.1.210) subfamily.</text>
</comment>
<comment type="online information" name="ABCMdb">
    <link uri="http://abcm2.hegelab.org/search"/>
    <text>Database for mutations in ABC proteins</text>
</comment>
<keyword id="KW-0002">3D-structure</keyword>
<keyword id="KW-0007">Acetylation</keyword>
<keyword id="KW-0025">Alternative splicing</keyword>
<keyword id="KW-0067">ATP-binding</keyword>
<keyword id="KW-0225">Disease variant</keyword>
<keyword id="KW-0472">Membrane</keyword>
<keyword id="KW-0496">Mitochondrion</keyword>
<keyword id="KW-0999">Mitochondrion inner membrane</keyword>
<keyword id="KW-0547">Nucleotide-binding</keyword>
<keyword id="KW-0597">Phosphoprotein</keyword>
<keyword id="KW-1267">Proteomics identification</keyword>
<keyword id="KW-1185">Reference proteome</keyword>
<keyword id="KW-0809">Transit peptide</keyword>
<keyword id="KW-0812">Transmembrane</keyword>
<keyword id="KW-1133">Transmembrane helix</keyword>
<keyword id="KW-0813">Transport</keyword>
<accession>O75027</accession>
<accession>G3XAC4</accession>
<accession>O75345</accession>
<accession>Q5VWY7</accession>
<accession>Q5VWY8</accession>
<accession>Q9BRE1</accession>
<accession>Q9UND1</accession>
<accession>Q9UP01</accession>
<name>ABCB7_HUMAN</name>
<organism>
    <name type="scientific">Homo sapiens</name>
    <name type="common">Human</name>
    <dbReference type="NCBI Taxonomy" id="9606"/>
    <lineage>
        <taxon>Eukaryota</taxon>
        <taxon>Metazoa</taxon>
        <taxon>Chordata</taxon>
        <taxon>Craniata</taxon>
        <taxon>Vertebrata</taxon>
        <taxon>Euteleostomi</taxon>
        <taxon>Mammalia</taxon>
        <taxon>Eutheria</taxon>
        <taxon>Euarchontoglires</taxon>
        <taxon>Primates</taxon>
        <taxon>Haplorrhini</taxon>
        <taxon>Catarrhini</taxon>
        <taxon>Hominidae</taxon>
        <taxon>Homo</taxon>
    </lineage>
</organism>
<evidence type="ECO:0000250" key="1">
    <source>
        <dbReference type="UniProtKB" id="P40416"/>
    </source>
</evidence>
<evidence type="ECO:0000250" key="2">
    <source>
        <dbReference type="UniProtKB" id="Q2G506"/>
    </source>
</evidence>
<evidence type="ECO:0000250" key="3">
    <source>
        <dbReference type="UniProtKB" id="Q61102"/>
    </source>
</evidence>
<evidence type="ECO:0000250" key="4">
    <source>
        <dbReference type="UniProtKB" id="Q704E8"/>
    </source>
</evidence>
<evidence type="ECO:0000250" key="5">
    <source>
        <dbReference type="UniProtKB" id="Q9NP58"/>
    </source>
</evidence>
<evidence type="ECO:0000255" key="6"/>
<evidence type="ECO:0000255" key="7">
    <source>
        <dbReference type="PROSITE-ProRule" id="PRU00434"/>
    </source>
</evidence>
<evidence type="ECO:0000255" key="8">
    <source>
        <dbReference type="PROSITE-ProRule" id="PRU00441"/>
    </source>
</evidence>
<evidence type="ECO:0000269" key="9">
    <source>
    </source>
</evidence>
<evidence type="ECO:0000269" key="10">
    <source>
    </source>
</evidence>
<evidence type="ECO:0000269" key="11">
    <source>
    </source>
</evidence>
<evidence type="ECO:0000269" key="12">
    <source>
    </source>
</evidence>
<evidence type="ECO:0000269" key="13">
    <source>
    </source>
</evidence>
<evidence type="ECO:0000269" key="14">
    <source>
    </source>
</evidence>
<evidence type="ECO:0000269" key="15">
    <source>
    </source>
</evidence>
<evidence type="ECO:0000269" key="16">
    <source>
    </source>
</evidence>
<evidence type="ECO:0000269" key="17">
    <source>
    </source>
</evidence>
<evidence type="ECO:0000303" key="18">
    <source>
    </source>
</evidence>
<evidence type="ECO:0000303" key="19">
    <source ref="5"/>
</evidence>
<evidence type="ECO:0000305" key="20"/>
<evidence type="ECO:0000305" key="21">
    <source>
    </source>
</evidence>
<evidence type="ECO:0000312" key="22">
    <source>
        <dbReference type="HGNC" id="HGNC:48"/>
    </source>
</evidence>
<evidence type="ECO:0007744" key="23">
    <source>
    </source>
</evidence>
<evidence type="ECO:0007829" key="24">
    <source>
        <dbReference type="PDB" id="7VGF"/>
    </source>
</evidence>
<reference key="1">
    <citation type="journal article" date="1998" name="J. Hum. Genet.">
        <title>Cloning and chromosomal mapping of a novel ABC transporter gene (hABC7), a candidate for X-linked sideroblastic anemia with spinocerebellar ataxia.</title>
        <authorList>
            <person name="Shimada Y."/>
            <person name="Okuno S."/>
            <person name="Kawai A."/>
            <person name="Shinomiya H."/>
            <person name="Saito A."/>
            <person name="Suzuki M."/>
            <person name="Omori Y."/>
            <person name="Nishino N."/>
            <person name="Kanemoto N."/>
            <person name="Fujiwara T."/>
            <person name="Horie M."/>
            <person name="Takahashi E."/>
        </authorList>
    </citation>
    <scope>NUCLEOTIDE SEQUENCE [MRNA] (ISOFORM 1)</scope>
    <scope>VARIANTS GLY-315 AND ILE-346</scope>
    <source>
        <tissue>Placenta</tissue>
    </source>
</reference>
<reference key="2">
    <citation type="journal article" date="1999" name="Hum. Mol. Genet.">
        <title>Mutation of a putative mitochondrial iron transporter gene (ABC7) in X-linked sideroblastic anemia and ataxia (XLSA/A).</title>
        <authorList>
            <person name="Allikmets R."/>
            <person name="Raskind W.H."/>
            <person name="Hutchinson A."/>
            <person name="Schueck N.D."/>
            <person name="Dean M."/>
            <person name="Koeller D.M."/>
        </authorList>
    </citation>
    <scope>NUCLEOTIDE SEQUENCE [MRNA] (ISOFORM 1)</scope>
    <scope>FUNCTION</scope>
    <scope>VARIANT SCAX6 MET-400</scope>
</reference>
<reference key="3">
    <citation type="journal article" date="2000" name="Blood">
        <title>Human ABC7 transporter: gene structure and mutation causing X-linked sideroblastic anemia with ataxia with disruption of cytosolic iron-sulfur protein maturation.</title>
        <authorList>
            <person name="Bekri S."/>
            <person name="Kispal G."/>
            <person name="Lange H."/>
            <person name="Fitzsimons E."/>
            <person name="Tolmie J."/>
            <person name="Lill R."/>
            <person name="Bishop D.F."/>
        </authorList>
    </citation>
    <scope>NUCLEOTIDE SEQUENCE [GENOMIC DNA]</scope>
    <scope>VARIANT SCAX6 LYS-433</scope>
</reference>
<reference key="4">
    <citation type="journal article" date="1998" name="Proc. Natl. Acad. Sci. U.S.A.">
        <title>Identification of genes expressed in human CD34(+) hematopoietic stem/progenitor cells by expressed sequence tags and efficient full-length cDNA cloning.</title>
        <authorList>
            <person name="Mao M."/>
            <person name="Fu G."/>
            <person name="Wu J.-S."/>
            <person name="Zhang Q.-H."/>
            <person name="Zhou J."/>
            <person name="Kan L.-X."/>
            <person name="Huang Q.-H."/>
            <person name="He K.-L."/>
            <person name="Gu B.-W."/>
            <person name="Han Z.-G."/>
            <person name="Shen Y."/>
            <person name="Gu J."/>
            <person name="Yu Y.-P."/>
            <person name="Xu S.-H."/>
            <person name="Wang Y.-X."/>
            <person name="Chen S.-J."/>
            <person name="Chen Z."/>
        </authorList>
    </citation>
    <scope>NUCLEOTIDE SEQUENCE [LARGE SCALE MRNA] (ISOFORM 1)</scope>
    <source>
        <tissue>Umbilical cord blood</tissue>
    </source>
</reference>
<reference key="5">
    <citation type="submission" date="2003-08" db="EMBL/GenBank/DDBJ databases">
        <title>Cloning of human full-length CDSs in BD Creator(TM) system donor vector.</title>
        <authorList>
            <person name="Kalnine N."/>
            <person name="Chen X."/>
            <person name="Rolfs A."/>
            <person name="Halleck A."/>
            <person name="Hines L."/>
            <person name="Eisenstein S."/>
            <person name="Koundinya M."/>
            <person name="Raphael J."/>
            <person name="Moreira D."/>
            <person name="Kelley T."/>
            <person name="LaBaer J."/>
            <person name="Lin Y."/>
            <person name="Phelan M."/>
            <person name="Farmer A."/>
        </authorList>
    </citation>
    <scope>NUCLEOTIDE SEQUENCE [LARGE SCALE MRNA] (ISOFORM 2)</scope>
</reference>
<reference key="6">
    <citation type="journal article" date="2005" name="Nature">
        <title>The DNA sequence of the human X chromosome.</title>
        <authorList>
            <person name="Ross M.T."/>
            <person name="Grafham D.V."/>
            <person name="Coffey A.J."/>
            <person name="Scherer S."/>
            <person name="McLay K."/>
            <person name="Muzny D."/>
            <person name="Platzer M."/>
            <person name="Howell G.R."/>
            <person name="Burrows C."/>
            <person name="Bird C.P."/>
            <person name="Frankish A."/>
            <person name="Lovell F.L."/>
            <person name="Howe K.L."/>
            <person name="Ashurst J.L."/>
            <person name="Fulton R.S."/>
            <person name="Sudbrak R."/>
            <person name="Wen G."/>
            <person name="Jones M.C."/>
            <person name="Hurles M.E."/>
            <person name="Andrews T.D."/>
            <person name="Scott C.E."/>
            <person name="Searle S."/>
            <person name="Ramser J."/>
            <person name="Whittaker A."/>
            <person name="Deadman R."/>
            <person name="Carter N.P."/>
            <person name="Hunt S.E."/>
            <person name="Chen R."/>
            <person name="Cree A."/>
            <person name="Gunaratne P."/>
            <person name="Havlak P."/>
            <person name="Hodgson A."/>
            <person name="Metzker M.L."/>
            <person name="Richards S."/>
            <person name="Scott G."/>
            <person name="Steffen D."/>
            <person name="Sodergren E."/>
            <person name="Wheeler D.A."/>
            <person name="Worley K.C."/>
            <person name="Ainscough R."/>
            <person name="Ambrose K.D."/>
            <person name="Ansari-Lari M.A."/>
            <person name="Aradhya S."/>
            <person name="Ashwell R.I."/>
            <person name="Babbage A.K."/>
            <person name="Bagguley C.L."/>
            <person name="Ballabio A."/>
            <person name="Banerjee R."/>
            <person name="Barker G.E."/>
            <person name="Barlow K.F."/>
            <person name="Barrett I.P."/>
            <person name="Bates K.N."/>
            <person name="Beare D.M."/>
            <person name="Beasley H."/>
            <person name="Beasley O."/>
            <person name="Beck A."/>
            <person name="Bethel G."/>
            <person name="Blechschmidt K."/>
            <person name="Brady N."/>
            <person name="Bray-Allen S."/>
            <person name="Bridgeman A.M."/>
            <person name="Brown A.J."/>
            <person name="Brown M.J."/>
            <person name="Bonnin D."/>
            <person name="Bruford E.A."/>
            <person name="Buhay C."/>
            <person name="Burch P."/>
            <person name="Burford D."/>
            <person name="Burgess J."/>
            <person name="Burrill W."/>
            <person name="Burton J."/>
            <person name="Bye J.M."/>
            <person name="Carder C."/>
            <person name="Carrel L."/>
            <person name="Chako J."/>
            <person name="Chapman J.C."/>
            <person name="Chavez D."/>
            <person name="Chen E."/>
            <person name="Chen G."/>
            <person name="Chen Y."/>
            <person name="Chen Z."/>
            <person name="Chinault C."/>
            <person name="Ciccodicola A."/>
            <person name="Clark S.Y."/>
            <person name="Clarke G."/>
            <person name="Clee C.M."/>
            <person name="Clegg S."/>
            <person name="Clerc-Blankenburg K."/>
            <person name="Clifford K."/>
            <person name="Cobley V."/>
            <person name="Cole C.G."/>
            <person name="Conquer J.S."/>
            <person name="Corby N."/>
            <person name="Connor R.E."/>
            <person name="David R."/>
            <person name="Davies J."/>
            <person name="Davis C."/>
            <person name="Davis J."/>
            <person name="Delgado O."/>
            <person name="Deshazo D."/>
            <person name="Dhami P."/>
            <person name="Ding Y."/>
            <person name="Dinh H."/>
            <person name="Dodsworth S."/>
            <person name="Draper H."/>
            <person name="Dugan-Rocha S."/>
            <person name="Dunham A."/>
            <person name="Dunn M."/>
            <person name="Durbin K.J."/>
            <person name="Dutta I."/>
            <person name="Eades T."/>
            <person name="Ellwood M."/>
            <person name="Emery-Cohen A."/>
            <person name="Errington H."/>
            <person name="Evans K.L."/>
            <person name="Faulkner L."/>
            <person name="Francis F."/>
            <person name="Frankland J."/>
            <person name="Fraser A.E."/>
            <person name="Galgoczy P."/>
            <person name="Gilbert J."/>
            <person name="Gill R."/>
            <person name="Gloeckner G."/>
            <person name="Gregory S.G."/>
            <person name="Gribble S."/>
            <person name="Griffiths C."/>
            <person name="Grocock R."/>
            <person name="Gu Y."/>
            <person name="Gwilliam R."/>
            <person name="Hamilton C."/>
            <person name="Hart E.A."/>
            <person name="Hawes A."/>
            <person name="Heath P.D."/>
            <person name="Heitmann K."/>
            <person name="Hennig S."/>
            <person name="Hernandez J."/>
            <person name="Hinzmann B."/>
            <person name="Ho S."/>
            <person name="Hoffs M."/>
            <person name="Howden P.J."/>
            <person name="Huckle E.J."/>
            <person name="Hume J."/>
            <person name="Hunt P.J."/>
            <person name="Hunt A.R."/>
            <person name="Isherwood J."/>
            <person name="Jacob L."/>
            <person name="Johnson D."/>
            <person name="Jones S."/>
            <person name="de Jong P.J."/>
            <person name="Joseph S.S."/>
            <person name="Keenan S."/>
            <person name="Kelly S."/>
            <person name="Kershaw J.K."/>
            <person name="Khan Z."/>
            <person name="Kioschis P."/>
            <person name="Klages S."/>
            <person name="Knights A.J."/>
            <person name="Kosiura A."/>
            <person name="Kovar-Smith C."/>
            <person name="Laird G.K."/>
            <person name="Langford C."/>
            <person name="Lawlor S."/>
            <person name="Leversha M."/>
            <person name="Lewis L."/>
            <person name="Liu W."/>
            <person name="Lloyd C."/>
            <person name="Lloyd D.M."/>
            <person name="Loulseged H."/>
            <person name="Loveland J.E."/>
            <person name="Lovell J.D."/>
            <person name="Lozado R."/>
            <person name="Lu J."/>
            <person name="Lyne R."/>
            <person name="Ma J."/>
            <person name="Maheshwari M."/>
            <person name="Matthews L.H."/>
            <person name="McDowall J."/>
            <person name="McLaren S."/>
            <person name="McMurray A."/>
            <person name="Meidl P."/>
            <person name="Meitinger T."/>
            <person name="Milne S."/>
            <person name="Miner G."/>
            <person name="Mistry S.L."/>
            <person name="Morgan M."/>
            <person name="Morris S."/>
            <person name="Mueller I."/>
            <person name="Mullikin J.C."/>
            <person name="Nguyen N."/>
            <person name="Nordsiek G."/>
            <person name="Nyakatura G."/>
            <person name="O'dell C.N."/>
            <person name="Okwuonu G."/>
            <person name="Palmer S."/>
            <person name="Pandian R."/>
            <person name="Parker D."/>
            <person name="Parrish J."/>
            <person name="Pasternak S."/>
            <person name="Patel D."/>
            <person name="Pearce A.V."/>
            <person name="Pearson D.M."/>
            <person name="Pelan S.E."/>
            <person name="Perez L."/>
            <person name="Porter K.M."/>
            <person name="Ramsey Y."/>
            <person name="Reichwald K."/>
            <person name="Rhodes S."/>
            <person name="Ridler K.A."/>
            <person name="Schlessinger D."/>
            <person name="Schueler M.G."/>
            <person name="Sehra H.K."/>
            <person name="Shaw-Smith C."/>
            <person name="Shen H."/>
            <person name="Sheridan E.M."/>
            <person name="Shownkeen R."/>
            <person name="Skuce C.D."/>
            <person name="Smith M.L."/>
            <person name="Sotheran E.C."/>
            <person name="Steingruber H.E."/>
            <person name="Steward C.A."/>
            <person name="Storey R."/>
            <person name="Swann R.M."/>
            <person name="Swarbreck D."/>
            <person name="Tabor P.E."/>
            <person name="Taudien S."/>
            <person name="Taylor T."/>
            <person name="Teague B."/>
            <person name="Thomas K."/>
            <person name="Thorpe A."/>
            <person name="Timms K."/>
            <person name="Tracey A."/>
            <person name="Trevanion S."/>
            <person name="Tromans A.C."/>
            <person name="d'Urso M."/>
            <person name="Verduzco D."/>
            <person name="Villasana D."/>
            <person name="Waldron L."/>
            <person name="Wall M."/>
            <person name="Wang Q."/>
            <person name="Warren J."/>
            <person name="Warry G.L."/>
            <person name="Wei X."/>
            <person name="West A."/>
            <person name="Whitehead S.L."/>
            <person name="Whiteley M.N."/>
            <person name="Wilkinson J.E."/>
            <person name="Willey D.L."/>
            <person name="Williams G."/>
            <person name="Williams L."/>
            <person name="Williamson A."/>
            <person name="Williamson H."/>
            <person name="Wilming L."/>
            <person name="Woodmansey R.L."/>
            <person name="Wray P.W."/>
            <person name="Yen J."/>
            <person name="Zhang J."/>
            <person name="Zhou J."/>
            <person name="Zoghbi H."/>
            <person name="Zorilla S."/>
            <person name="Buck D."/>
            <person name="Reinhardt R."/>
            <person name="Poustka A."/>
            <person name="Rosenthal A."/>
            <person name="Lehrach H."/>
            <person name="Meindl A."/>
            <person name="Minx P.J."/>
            <person name="Hillier L.W."/>
            <person name="Willard H.F."/>
            <person name="Wilson R.K."/>
            <person name="Waterston R.H."/>
            <person name="Rice C.M."/>
            <person name="Vaudin M."/>
            <person name="Coulson A."/>
            <person name="Nelson D.L."/>
            <person name="Weinstock G."/>
            <person name="Sulston J.E."/>
            <person name="Durbin R.M."/>
            <person name="Hubbard T."/>
            <person name="Gibbs R.A."/>
            <person name="Beck S."/>
            <person name="Rogers J."/>
            <person name="Bentley D.R."/>
        </authorList>
    </citation>
    <scope>NUCLEOTIDE SEQUENCE [LARGE SCALE GENOMIC DNA]</scope>
</reference>
<reference key="7">
    <citation type="submission" date="2005-09" db="EMBL/GenBank/DDBJ databases">
        <authorList>
            <person name="Mural R.J."/>
            <person name="Istrail S."/>
            <person name="Sutton G.G."/>
            <person name="Florea L."/>
            <person name="Halpern A.L."/>
            <person name="Mobarry C.M."/>
            <person name="Lippert R."/>
            <person name="Walenz B."/>
            <person name="Shatkay H."/>
            <person name="Dew I."/>
            <person name="Miller J.R."/>
            <person name="Flanigan M.J."/>
            <person name="Edwards N.J."/>
            <person name="Bolanos R."/>
            <person name="Fasulo D."/>
            <person name="Halldorsson B.V."/>
            <person name="Hannenhalli S."/>
            <person name="Turner R."/>
            <person name="Yooseph S."/>
            <person name="Lu F."/>
            <person name="Nusskern D.R."/>
            <person name="Shue B.C."/>
            <person name="Zheng X.H."/>
            <person name="Zhong F."/>
            <person name="Delcher A.L."/>
            <person name="Huson D.H."/>
            <person name="Kravitz S.A."/>
            <person name="Mouchard L."/>
            <person name="Reinert K."/>
            <person name="Remington K.A."/>
            <person name="Clark A.G."/>
            <person name="Waterman M.S."/>
            <person name="Eichler E.E."/>
            <person name="Adams M.D."/>
            <person name="Hunkapiller M.W."/>
            <person name="Myers E.W."/>
            <person name="Venter J.C."/>
        </authorList>
    </citation>
    <scope>NUCLEOTIDE SEQUENCE [LARGE SCALE GENOMIC DNA]</scope>
</reference>
<reference key="8">
    <citation type="journal article" date="2004" name="Genome Res.">
        <title>The status, quality, and expansion of the NIH full-length cDNA project: the Mammalian Gene Collection (MGC).</title>
        <authorList>
            <consortium name="The MGC Project Team"/>
        </authorList>
    </citation>
    <scope>NUCLEOTIDE SEQUENCE [LARGE SCALE MRNA] (ISOFORM 2)</scope>
    <source>
        <tissue>Muscle</tissue>
    </source>
</reference>
<reference key="9">
    <citation type="journal article" date="1998" name="FEBS Lett.">
        <title>Identification of a human mitochondrial ABC transporter, the functional orthologue of yeast Atm1p.</title>
        <authorList>
            <person name="Csere P."/>
            <person name="Lill R."/>
            <person name="Kispal G."/>
        </authorList>
    </citation>
    <scope>NUCLEOTIDE SEQUENCE [MRNA] OF 5-752 (ISOFORM 1)</scope>
</reference>
<reference key="10">
    <citation type="journal article" date="2007" name="Blood">
        <title>RNA silencing of the mitochondrial ABCB7 transporter in HeLa cells causes an iron-deficient phenotype with mitochondrial iron overload.</title>
        <authorList>
            <person name="Cavadini P."/>
            <person name="Biasiotto G."/>
            <person name="Poli M."/>
            <person name="Levi S."/>
            <person name="Verardi R."/>
            <person name="Zanella I."/>
            <person name="Derosas M."/>
            <person name="Ingrassia R."/>
            <person name="Corrado M."/>
            <person name="Arosio P."/>
        </authorList>
    </citation>
    <scope>FUNCTION</scope>
</reference>
<reference key="11">
    <citation type="journal article" date="2009" name="Science">
        <title>Lysine acetylation targets protein complexes and co-regulates major cellular functions.</title>
        <authorList>
            <person name="Choudhary C."/>
            <person name="Kumar C."/>
            <person name="Gnad F."/>
            <person name="Nielsen M.L."/>
            <person name="Rehman M."/>
            <person name="Walther T.C."/>
            <person name="Olsen J.V."/>
            <person name="Mann M."/>
        </authorList>
    </citation>
    <scope>ACETYLATION [LARGE SCALE ANALYSIS] AT LYS-216 AND LYS-251</scope>
    <scope>IDENTIFICATION BY MASS SPECTROMETRY [LARGE SCALE ANALYSIS]</scope>
</reference>
<reference key="12">
    <citation type="journal article" date="2011" name="BMC Syst. Biol.">
        <title>Initial characterization of the human central proteome.</title>
        <authorList>
            <person name="Burkard T.R."/>
            <person name="Planyavsky M."/>
            <person name="Kaupe I."/>
            <person name="Breitwieser F.P."/>
            <person name="Buerckstuemmer T."/>
            <person name="Bennett K.L."/>
            <person name="Superti-Furga G."/>
            <person name="Colinge J."/>
        </authorList>
    </citation>
    <scope>IDENTIFICATION BY MASS SPECTROMETRY [LARGE SCALE ANALYSIS]</scope>
</reference>
<reference key="13">
    <citation type="journal article" date="2014" name="FASEB J.">
        <title>PAAT, a novel ATPase and trans-regulator of mitochondrial ABC transporters, is critically involved in the maintenance of mitochondrial homeostasis.</title>
        <authorList>
            <person name="Yang X."/>
            <person name="Yang J."/>
            <person name="Li L."/>
            <person name="Sun L."/>
            <person name="Yi X."/>
            <person name="Han X."/>
            <person name="Si W."/>
            <person name="Yan R."/>
            <person name="Chen Z."/>
            <person name="Xie G."/>
            <person name="Li W."/>
            <person name="Shang Y."/>
            <person name="Liang J."/>
        </authorList>
    </citation>
    <scope>INTERACTION WITH C10ORF88</scope>
</reference>
<reference key="14">
    <citation type="journal article" date="2015" name="Proteomics">
        <title>N-terminome analysis of the human mitochondrial proteome.</title>
        <authorList>
            <person name="Vaca Jacome A.S."/>
            <person name="Rabilloud T."/>
            <person name="Schaeffer-Reiss C."/>
            <person name="Rompais M."/>
            <person name="Ayoub D."/>
            <person name="Lane L."/>
            <person name="Bairoch A."/>
            <person name="Van Dorsselaer A."/>
            <person name="Carapito C."/>
        </authorList>
    </citation>
    <scope>IDENTIFICATION BY MASS SPECTROMETRY [LARGE SCALE ANALYSIS]</scope>
</reference>
<reference key="15">
    <citation type="journal article" date="2019" name="Haematologica">
        <title>Dimeric ferrochelatase bridges ABCB7 and ABCB10 homodimers in an architecturally defined molecular complex required for heme biosynthesis.</title>
        <authorList>
            <person name="Maio N."/>
            <person name="Kim K.S."/>
            <person name="Holmes-Hampton G."/>
            <person name="Singh A."/>
            <person name="Rouault T.A."/>
        </authorList>
    </citation>
    <scope>FUNCTION</scope>
    <scope>INTERACTION WITH FECH</scope>
    <scope>SUBUNIT</scope>
</reference>
<reference key="16">
    <citation type="journal article" date="2021" name="Arch. Biochem. Biophys.">
        <title>Evolution of the human mitochondrial ABCB7 [2Fe-2S](GS)4 cluster exporter and the molecular mechanism of an E433K disease-causing mutation.</title>
        <authorList>
            <person name="Pearson S.A."/>
            <person name="Cowan J.A."/>
        </authorList>
    </citation>
    <scope>ACTIVITY REGULATION</scope>
    <scope>MUTAGENESIS OF GLU-433</scope>
    <scope>BIOPHYSICOCHEMICAL PROPERTIES</scope>
    <scope>FUNCTION</scope>
    <scope>CATALYTIC ACTIVITY</scope>
    <scope>CHARACTERIZATIONOF VARIANT SCAX6 LYS-433</scope>
</reference>
<reference key="17">
    <citation type="journal article" date="2001" name="Br. J. Haematol.">
        <title>X-linked cerebellar ataxia and sideroblastic anaemia associated with a missense mutation in the ABC7 gene predicting V411L.</title>
        <authorList>
            <person name="Maguire A."/>
            <person name="Hellier K."/>
            <person name="Hammans S."/>
            <person name="May A."/>
        </authorList>
    </citation>
    <scope>VARIANT SCAX6 LEU-411</scope>
    <scope>VARIANTS GLY-315 AND ILE-346</scope>
</reference>
<reference key="18">
    <citation type="journal article" date="2012" name="Eur. J. Paediatr. Neurol.">
        <title>X-linked sideroblastic anemia and ataxia: A new family with identification of a fourth ABCB7 gene mutation.</title>
        <authorList>
            <person name="D'Hooghe M."/>
            <person name="Selleslag D."/>
            <person name="Mortier G."/>
            <person name="Van Coster R."/>
            <person name="Vermeersch P."/>
            <person name="Billiet J."/>
            <person name="Bekri S."/>
        </authorList>
    </citation>
    <scope>VARIANT SCAX6 ASP-208</scope>
</reference>
<protein>
    <recommendedName>
        <fullName evidence="20">Iron-sulfur clusters transporter ABCB7, mitochondrial</fullName>
    </recommendedName>
    <alternativeName>
        <fullName evidence="20">ATP-binding cassette sub-family B member 7, mitochondrial</fullName>
    </alternativeName>
    <alternativeName>
        <fullName>ATP-binding cassette transporter 7</fullName>
        <shortName>ABC transporter 7 protein</shortName>
    </alternativeName>
</protein>
<feature type="transit peptide" description="Mitochondrion" evidence="6">
    <location>
        <begin position="1"/>
        <end position="22"/>
    </location>
</feature>
<feature type="chain" id="PRO_0000000249" description="Iron-sulfur clusters transporter ABCB7, mitochondrial">
    <location>
        <begin position="23"/>
        <end position="752"/>
    </location>
</feature>
<feature type="topological domain" description="Mitochondrial matrix" evidence="1">
    <location>
        <begin position="23"/>
        <end position="140"/>
    </location>
</feature>
<feature type="transmembrane region" description="Helical" evidence="8">
    <location>
        <begin position="141"/>
        <end position="161"/>
    </location>
</feature>
<feature type="topological domain" description="Mitochondrial intermembrane" evidence="1">
    <location>
        <begin position="162"/>
        <end position="185"/>
    </location>
</feature>
<feature type="transmembrane region" description="Helical" evidence="8">
    <location>
        <begin position="186"/>
        <end position="206"/>
    </location>
</feature>
<feature type="topological domain" description="Mitochondrial matrix" evidence="1">
    <location>
        <begin position="207"/>
        <end position="259"/>
    </location>
</feature>
<feature type="transmembrane region" description="Helical" evidence="8">
    <location>
        <begin position="260"/>
        <end position="280"/>
    </location>
</feature>
<feature type="topological domain" description="Mitochondrial intermembrane" evidence="1">
    <location>
        <begin position="281"/>
        <end position="290"/>
    </location>
</feature>
<feature type="transmembrane region" description="Helical" evidence="8">
    <location>
        <begin position="291"/>
        <end position="311"/>
    </location>
</feature>
<feature type="topological domain" description="Mitochondrial matrix" evidence="1">
    <location>
        <begin position="312"/>
        <end position="382"/>
    </location>
</feature>
<feature type="transmembrane region" description="Helical" evidence="8">
    <location>
        <begin position="383"/>
        <end position="403"/>
    </location>
</feature>
<feature type="topological domain" description="Mitochondrial intermembrane" evidence="1">
    <location>
        <begin position="404"/>
        <end position="409"/>
    </location>
</feature>
<feature type="transmembrane region" description="Helical" evidence="8">
    <location>
        <begin position="410"/>
        <end position="430"/>
    </location>
</feature>
<feature type="topological domain" description="Mitochondrial matrix" evidence="1">
    <location>
        <begin position="431"/>
        <end position="752"/>
    </location>
</feature>
<feature type="domain" description="ABC transmembrane type-1" evidence="8">
    <location>
        <begin position="140"/>
        <end position="436"/>
    </location>
</feature>
<feature type="domain" description="ABC transporter" evidence="7">
    <location>
        <begin position="472"/>
        <end position="706"/>
    </location>
</feature>
<feature type="binding site" evidence="1">
    <location>
        <begin position="315"/>
        <end position="319"/>
    </location>
    <ligand>
        <name>glutathione</name>
        <dbReference type="ChEBI" id="CHEBI:57925"/>
    </ligand>
</feature>
<feature type="binding site" evidence="1">
    <location>
        <begin position="378"/>
        <end position="381"/>
    </location>
    <ligand>
        <name>glutathione</name>
        <dbReference type="ChEBI" id="CHEBI:57925"/>
    </ligand>
</feature>
<feature type="binding site" evidence="2">
    <location>
        <position position="428"/>
    </location>
    <ligand>
        <name>glutathione</name>
        <dbReference type="ChEBI" id="CHEBI:57925"/>
    </ligand>
</feature>
<feature type="binding site" evidence="5">
    <location>
        <position position="481"/>
    </location>
    <ligand>
        <name>ATP</name>
        <dbReference type="ChEBI" id="CHEBI:30616"/>
    </ligand>
</feature>
<feature type="binding site" evidence="7">
    <location>
        <begin position="505"/>
        <end position="516"/>
    </location>
    <ligand>
        <name>ATP</name>
        <dbReference type="ChEBI" id="CHEBI:30616"/>
    </ligand>
</feature>
<feature type="modified residue" description="N6-acetyllysine" evidence="23">
    <location>
        <position position="216"/>
    </location>
</feature>
<feature type="modified residue" description="N6-acetyllysine" evidence="23">
    <location>
        <position position="251"/>
    </location>
</feature>
<feature type="modified residue" description="Phosphoserine" evidence="4">
    <location>
        <position position="336"/>
    </location>
</feature>
<feature type="modified residue" description="Phosphotyrosine" evidence="4">
    <location>
        <position position="340"/>
    </location>
</feature>
<feature type="modified residue" description="Phosphothreonine" evidence="4">
    <location>
        <position position="342"/>
    </location>
</feature>
<feature type="splice variant" id="VSP_014635" description="In isoform 2." evidence="18 19">
    <original>Q</original>
    <variation>QQ</variation>
    <location>
        <position position="56"/>
    </location>
</feature>
<feature type="splice variant" id="VSP_054700" description="In isoform 3." evidence="20">
    <location>
        <begin position="112"/>
        <end position="151"/>
    </location>
</feature>
<feature type="sequence variant" id="VAR_067354" description="In SCAX6; dbSNP:rs515726147." evidence="13">
    <original>E</original>
    <variation>D</variation>
    <location>
        <position position="208"/>
    </location>
</feature>
<feature type="sequence variant" id="VAR_022872" evidence="11 17">
    <original>R</original>
    <variation>G</variation>
    <location>
        <position position="315"/>
    </location>
</feature>
<feature type="sequence variant" id="VAR_022873" evidence="11 17">
    <original>F</original>
    <variation>I</variation>
    <location>
        <position position="346"/>
    </location>
</feature>
<feature type="sequence variant" id="VAR_009156" description="In SCAX6; dbSNP:rs72554634." evidence="9">
    <original>I</original>
    <variation>M</variation>
    <location>
        <position position="400"/>
    </location>
</feature>
<feature type="sequence variant" id="VAR_022874" description="In SCAX6; dbSNP:rs80356713." evidence="11">
    <original>V</original>
    <variation>L</variation>
    <location>
        <position position="411"/>
    </location>
</feature>
<feature type="sequence variant" id="VAR_012640" description="In SCAX6; impaired maturation of cytosolic Fe/S proteins; loss of the ability to couple MgATP binding with stimulation of ATPase activity at the nucleotide binding domain; loss of [2Fe-2S]-(GS)4 cluster transport; loss of ATPase activity stimulation by [2Fe-2S]-(GS)4 cluster stimulation; dbSNP:rs80356714." evidence="10 16">
    <original>E</original>
    <variation>K</variation>
    <location>
        <position position="433"/>
    </location>
</feature>
<feature type="sequence variant" id="VAR_055471" description="In dbSNP:rs1340989.">
    <original>A</original>
    <variation>V</variation>
    <location>
        <position position="580"/>
    </location>
</feature>
<feature type="sequence variant" id="VAR_037972" description="In dbSNP:rs1340989.">
    <original>V</original>
    <variation>A</variation>
    <location>
        <position position="581"/>
    </location>
</feature>
<feature type="mutagenesis site" description="Significantly increases ATPase activity by [2Fe-2S]-(GS)4 cluster stimulation. Increases affinity for Mg-ATP. Does not affect affinity for Mg-ATP in the presence of the in the presence of [2Fe-2S]-(GS)4 cluster. Does not affect [2Fe-2S]-(GS)4 cluster transport." evidence="16">
    <original>E</original>
    <variation>D</variation>
    <location>
        <position position="433"/>
    </location>
</feature>
<feature type="mutagenesis site" description="Loss of ATPase activity stimulation by [2Fe-2S]-(GS)4 cluster stimulation. Loss of the ability to couple MgATP binding with stimulation of ATPase activity at the nucleotide binding domain. Loss of [2Fe-2S]-(GS)4 cluster transport." evidence="16">
    <original>E</original>
    <variation>Q</variation>
    <location>
        <position position="433"/>
    </location>
</feature>
<feature type="sequence conflict" description="In Ref. 4; AAC39865." evidence="20" ref="4">
    <original>A</original>
    <variation>P</variation>
    <location>
        <position position="141"/>
    </location>
</feature>
<feature type="sequence conflict" description="In Ref. 1; BAA28861." evidence="20" ref="1">
    <original>R</original>
    <variation>K</variation>
    <location>
        <position position="258"/>
    </location>
</feature>
<feature type="sequence conflict" description="In Ref. 4; AAC39865." evidence="20" ref="4">
    <original>LLPIMF</original>
    <variation>PLPNHV</variation>
    <location>
        <begin position="271"/>
        <end position="276"/>
    </location>
</feature>
<feature type="sequence conflict" description="In Ref. 4; AAC39865." evidence="20" ref="4">
    <original>L</original>
    <variation>LL</variation>
    <location>
        <position position="280"/>
    </location>
</feature>
<feature type="sequence conflict" description="In Ref. 4; AAC39865." evidence="20" ref="4">
    <original>G</original>
    <variation>C</variation>
    <location>
        <position position="290"/>
    </location>
</feature>
<feature type="sequence conflict" description="In Ref. 4; AAC39865." evidence="20" ref="4">
    <original>FALVT</original>
    <variation>LLGN</variation>
    <location>
        <begin position="293"/>
        <end position="297"/>
    </location>
</feature>
<feature type="sequence conflict" description="In Ref. 4; AAC39865." evidence="20" ref="4">
    <original>IEMNK</original>
    <variation>LEIDQ</variation>
    <location>
        <begin position="320"/>
        <end position="324"/>
    </location>
</feature>
<feature type="sequence conflict" description="In Ref. 9; AAD47141." evidence="20" ref="9">
    <original>E</original>
    <variation>V</variation>
    <location>
        <position position="542"/>
    </location>
</feature>
<feature type="helix" evidence="24">
    <location>
        <begin position="134"/>
        <end position="170"/>
    </location>
</feature>
<feature type="helix" evidence="24">
    <location>
        <begin position="186"/>
        <end position="233"/>
    </location>
</feature>
<feature type="helix" evidence="24">
    <location>
        <begin position="238"/>
        <end position="243"/>
    </location>
</feature>
<feature type="helix" evidence="24">
    <location>
        <begin position="248"/>
        <end position="288"/>
    </location>
</feature>
<feature type="helix" evidence="24">
    <location>
        <begin position="291"/>
        <end position="338"/>
    </location>
</feature>
<feature type="helix" evidence="24">
    <location>
        <begin position="340"/>
        <end position="345"/>
    </location>
</feature>
<feature type="helix" evidence="24">
    <location>
        <begin position="350"/>
        <end position="401"/>
    </location>
</feature>
<feature type="helix" evidence="24">
    <location>
        <begin position="410"/>
        <end position="421"/>
    </location>
</feature>
<feature type="helix" evidence="24">
    <location>
        <begin position="424"/>
        <end position="431"/>
    </location>
</feature>
<feature type="helix" evidence="24">
    <location>
        <begin position="434"/>
        <end position="449"/>
    </location>
</feature>
<feature type="turn" evidence="24">
    <location>
        <begin position="450"/>
        <end position="452"/>
    </location>
</feature>
<feature type="strand" evidence="24">
    <location>
        <begin position="473"/>
        <end position="479"/>
    </location>
</feature>
<feature type="strand" evidence="24">
    <location>
        <begin position="487"/>
        <end position="491"/>
    </location>
</feature>
<feature type="strand" evidence="24">
    <location>
        <begin position="500"/>
        <end position="504"/>
    </location>
</feature>
<feature type="helix" evidence="24">
    <location>
        <begin position="513"/>
        <end position="518"/>
    </location>
</feature>
<feature type="strand" evidence="24">
    <location>
        <begin position="525"/>
        <end position="531"/>
    </location>
</feature>
<feature type="helix" evidence="24">
    <location>
        <begin position="536"/>
        <end position="538"/>
    </location>
</feature>
<feature type="helix" evidence="24">
    <location>
        <begin position="541"/>
        <end position="547"/>
    </location>
</feature>
<feature type="strand" evidence="24">
    <location>
        <begin position="548"/>
        <end position="551"/>
    </location>
</feature>
<feature type="strand" evidence="24">
    <location>
        <begin position="559"/>
        <end position="561"/>
    </location>
</feature>
<feature type="helix" evidence="24">
    <location>
        <begin position="562"/>
        <end position="567"/>
    </location>
</feature>
<feature type="helix" evidence="24">
    <location>
        <begin position="575"/>
        <end position="584"/>
    </location>
</feature>
<feature type="helix" evidence="24">
    <location>
        <begin position="588"/>
        <end position="593"/>
    </location>
</feature>
<feature type="strand" evidence="24">
    <location>
        <begin position="594"/>
        <end position="597"/>
    </location>
</feature>
<feature type="strand" evidence="24">
    <location>
        <begin position="601"/>
        <end position="606"/>
    </location>
</feature>
<feature type="helix" evidence="24">
    <location>
        <begin position="611"/>
        <end position="625"/>
    </location>
</feature>
<feature type="strand" evidence="24">
    <location>
        <begin position="628"/>
        <end position="633"/>
    </location>
</feature>
<feature type="helix" evidence="24">
    <location>
        <begin position="641"/>
        <end position="655"/>
    </location>
</feature>
<feature type="strand" evidence="24">
    <location>
        <begin position="658"/>
        <end position="663"/>
    </location>
</feature>
<feature type="helix" evidence="24">
    <location>
        <begin position="667"/>
        <end position="670"/>
    </location>
</feature>
<feature type="strand" evidence="24">
    <location>
        <begin position="674"/>
        <end position="680"/>
    </location>
</feature>
<feature type="strand" evidence="24">
    <location>
        <begin position="683"/>
        <end position="688"/>
    </location>
</feature>
<feature type="helix" evidence="24">
    <location>
        <begin position="690"/>
        <end position="692"/>
    </location>
</feature>